<protein>
    <recommendedName>
        <fullName>Stationary-phase-induced ribosome-associated protein</fullName>
        <shortName>SRA</shortName>
    </recommendedName>
    <alternativeName>
        <fullName>30S ribosomal protein S22</fullName>
    </alternativeName>
</protein>
<name>SRA_ECO57</name>
<gene>
    <name type="primary">sra</name>
    <name type="synonym">rpsV</name>
    <name type="ordered locus">Z2230</name>
    <name type="ordered locus">ECs2084</name>
</gene>
<evidence type="ECO:0000250" key="1"/>
<evidence type="ECO:0000256" key="2">
    <source>
        <dbReference type="SAM" id="MobiDB-lite"/>
    </source>
</evidence>
<evidence type="ECO:0000305" key="3"/>
<accession>P68193</accession>
<accession>P28690</accession>
<feature type="chain" id="PRO_0000208692" description="Stationary-phase-induced ribosome-associated protein">
    <location>
        <begin position="1"/>
        <end position="45"/>
    </location>
</feature>
<feature type="region of interest" description="Disordered" evidence="2">
    <location>
        <begin position="21"/>
        <end position="45"/>
    </location>
</feature>
<comment type="function">
    <text evidence="1">Although this protein associates with the 30S subunit of the ribosome it is not considered to be a bona fide ribosomal protein.</text>
</comment>
<comment type="subunit">
    <text evidence="1">Associates exclusively with the 30S subunit; there is 0.1 copy per ribosome in the exponential phase and 0.4 copies per ribosome in the stationary phase.</text>
</comment>
<comment type="similarity">
    <text evidence="3">Belongs to the SRA family.</text>
</comment>
<keyword id="KW-1185">Reference proteome</keyword>
<organism>
    <name type="scientific">Escherichia coli O157:H7</name>
    <dbReference type="NCBI Taxonomy" id="83334"/>
    <lineage>
        <taxon>Bacteria</taxon>
        <taxon>Pseudomonadati</taxon>
        <taxon>Pseudomonadota</taxon>
        <taxon>Gammaproteobacteria</taxon>
        <taxon>Enterobacterales</taxon>
        <taxon>Enterobacteriaceae</taxon>
        <taxon>Escherichia</taxon>
    </lineage>
</organism>
<proteinExistence type="inferred from homology"/>
<reference key="1">
    <citation type="journal article" date="2001" name="Nature">
        <title>Genome sequence of enterohaemorrhagic Escherichia coli O157:H7.</title>
        <authorList>
            <person name="Perna N.T."/>
            <person name="Plunkett G. III"/>
            <person name="Burland V."/>
            <person name="Mau B."/>
            <person name="Glasner J.D."/>
            <person name="Rose D.J."/>
            <person name="Mayhew G.F."/>
            <person name="Evans P.S."/>
            <person name="Gregor J."/>
            <person name="Kirkpatrick H.A."/>
            <person name="Posfai G."/>
            <person name="Hackett J."/>
            <person name="Klink S."/>
            <person name="Boutin A."/>
            <person name="Shao Y."/>
            <person name="Miller L."/>
            <person name="Grotbeck E.J."/>
            <person name="Davis N.W."/>
            <person name="Lim A."/>
            <person name="Dimalanta E.T."/>
            <person name="Potamousis K."/>
            <person name="Apodaca J."/>
            <person name="Anantharaman T.S."/>
            <person name="Lin J."/>
            <person name="Yen G."/>
            <person name="Schwartz D.C."/>
            <person name="Welch R.A."/>
            <person name="Blattner F.R."/>
        </authorList>
    </citation>
    <scope>NUCLEOTIDE SEQUENCE [LARGE SCALE GENOMIC DNA]</scope>
    <source>
        <strain>O157:H7 / EDL933 / ATCC 700927 / EHEC</strain>
    </source>
</reference>
<reference key="2">
    <citation type="journal article" date="2001" name="DNA Res.">
        <title>Complete genome sequence of enterohemorrhagic Escherichia coli O157:H7 and genomic comparison with a laboratory strain K-12.</title>
        <authorList>
            <person name="Hayashi T."/>
            <person name="Makino K."/>
            <person name="Ohnishi M."/>
            <person name="Kurokawa K."/>
            <person name="Ishii K."/>
            <person name="Yokoyama K."/>
            <person name="Han C.-G."/>
            <person name="Ohtsubo E."/>
            <person name="Nakayama K."/>
            <person name="Murata T."/>
            <person name="Tanaka M."/>
            <person name="Tobe T."/>
            <person name="Iida T."/>
            <person name="Takami H."/>
            <person name="Honda T."/>
            <person name="Sasakawa C."/>
            <person name="Ogasawara N."/>
            <person name="Yasunaga T."/>
            <person name="Kuhara S."/>
            <person name="Shiba T."/>
            <person name="Hattori M."/>
            <person name="Shinagawa H."/>
        </authorList>
    </citation>
    <scope>NUCLEOTIDE SEQUENCE [LARGE SCALE GENOMIC DNA]</scope>
    <source>
        <strain>O157:H7 / Sakai / RIMD 0509952 / EHEC</strain>
    </source>
</reference>
<dbReference type="EMBL" id="AE005174">
    <property type="protein sequence ID" value="AAG56289.1"/>
    <property type="molecule type" value="Genomic_DNA"/>
</dbReference>
<dbReference type="EMBL" id="BA000007">
    <property type="protein sequence ID" value="BAB35507.1"/>
    <property type="molecule type" value="Genomic_DNA"/>
</dbReference>
<dbReference type="PIR" id="D90889">
    <property type="entry name" value="D90889"/>
</dbReference>
<dbReference type="PIR" id="E85728">
    <property type="entry name" value="E85728"/>
</dbReference>
<dbReference type="RefSeq" id="NP_310111.1">
    <property type="nucleotide sequence ID" value="NC_002695.1"/>
</dbReference>
<dbReference type="RefSeq" id="WP_000841554.1">
    <property type="nucleotide sequence ID" value="NZ_VOAI01000034.1"/>
</dbReference>
<dbReference type="STRING" id="155864.Z2230"/>
<dbReference type="GeneID" id="917282"/>
<dbReference type="GeneID" id="93775639"/>
<dbReference type="KEGG" id="ece:Z2230"/>
<dbReference type="KEGG" id="ecs:ECs_2084"/>
<dbReference type="PATRIC" id="fig|386585.9.peg.2189"/>
<dbReference type="eggNOG" id="ENOG5033FPW">
    <property type="taxonomic scope" value="Bacteria"/>
</dbReference>
<dbReference type="HOGENOM" id="CLU_210948_0_0_6"/>
<dbReference type="Proteomes" id="UP000000558">
    <property type="component" value="Chromosome"/>
</dbReference>
<dbReference type="Proteomes" id="UP000002519">
    <property type="component" value="Chromosome"/>
</dbReference>
<dbReference type="GO" id="GO:0006412">
    <property type="term" value="P:translation"/>
    <property type="evidence" value="ECO:0007669"/>
    <property type="project" value="InterPro"/>
</dbReference>
<dbReference type="InterPro" id="IPR012607">
    <property type="entry name" value="SRA-like"/>
</dbReference>
<dbReference type="NCBIfam" id="NF007473">
    <property type="entry name" value="PRK10057.1"/>
    <property type="match status" value="1"/>
</dbReference>
<dbReference type="Pfam" id="PF08136">
    <property type="entry name" value="SRA_like"/>
    <property type="match status" value="1"/>
</dbReference>
<sequence>MKSNRQARHILGLDHKISNQRKIVTEGDKSSVVNNPTGRKRPAEK</sequence>